<organism>
    <name type="scientific">Staphylococcus aureus (strain bovine RF122 / ET3-1)</name>
    <dbReference type="NCBI Taxonomy" id="273036"/>
    <lineage>
        <taxon>Bacteria</taxon>
        <taxon>Bacillati</taxon>
        <taxon>Bacillota</taxon>
        <taxon>Bacilli</taxon>
        <taxon>Bacillales</taxon>
        <taxon>Staphylococcaceae</taxon>
        <taxon>Staphylococcus</taxon>
    </lineage>
</organism>
<keyword id="KW-0028">Amino-acid biosynthesis</keyword>
<keyword id="KW-0963">Cytoplasm</keyword>
<keyword id="KW-0554">One-carbon metabolism</keyword>
<keyword id="KW-0663">Pyridoxal phosphate</keyword>
<keyword id="KW-0808">Transferase</keyword>
<comment type="function">
    <text evidence="1">Catalyzes the reversible interconversion of serine and glycine with tetrahydrofolate (THF) serving as the one-carbon carrier. This reaction serves as the major source of one-carbon groups required for the biosynthesis of purines, thymidylate, methionine, and other important biomolecules. Also exhibits THF-independent aldolase activity toward beta-hydroxyamino acids, producing glycine and aldehydes, via a retro-aldol mechanism.</text>
</comment>
<comment type="catalytic activity">
    <reaction evidence="1">
        <text>(6R)-5,10-methylene-5,6,7,8-tetrahydrofolate + glycine + H2O = (6S)-5,6,7,8-tetrahydrofolate + L-serine</text>
        <dbReference type="Rhea" id="RHEA:15481"/>
        <dbReference type="ChEBI" id="CHEBI:15377"/>
        <dbReference type="ChEBI" id="CHEBI:15636"/>
        <dbReference type="ChEBI" id="CHEBI:33384"/>
        <dbReference type="ChEBI" id="CHEBI:57305"/>
        <dbReference type="ChEBI" id="CHEBI:57453"/>
        <dbReference type="EC" id="2.1.2.1"/>
    </reaction>
</comment>
<comment type="cofactor">
    <cofactor evidence="1">
        <name>pyridoxal 5'-phosphate</name>
        <dbReference type="ChEBI" id="CHEBI:597326"/>
    </cofactor>
</comment>
<comment type="pathway">
    <text evidence="1">One-carbon metabolism; tetrahydrofolate interconversion.</text>
</comment>
<comment type="pathway">
    <text evidence="1">Amino-acid biosynthesis; glycine biosynthesis; glycine from L-serine: step 1/1.</text>
</comment>
<comment type="subunit">
    <text evidence="1">Homodimer.</text>
</comment>
<comment type="subcellular location">
    <subcellularLocation>
        <location evidence="1">Cytoplasm</location>
    </subcellularLocation>
</comment>
<comment type="similarity">
    <text evidence="1">Belongs to the SHMT family.</text>
</comment>
<accession>Q2YUJ1</accession>
<feature type="chain" id="PRO_0000235026" description="Serine hydroxymethyltransferase">
    <location>
        <begin position="1"/>
        <end position="412"/>
    </location>
</feature>
<feature type="binding site" evidence="1">
    <location>
        <position position="117"/>
    </location>
    <ligand>
        <name>(6S)-5,6,7,8-tetrahydrofolate</name>
        <dbReference type="ChEBI" id="CHEBI:57453"/>
    </ligand>
</feature>
<feature type="binding site" evidence="1">
    <location>
        <begin position="121"/>
        <end position="123"/>
    </location>
    <ligand>
        <name>(6S)-5,6,7,8-tetrahydrofolate</name>
        <dbReference type="ChEBI" id="CHEBI:57453"/>
    </ligand>
</feature>
<feature type="site" description="Plays an important role in substrate specificity" evidence="1">
    <location>
        <position position="225"/>
    </location>
</feature>
<feature type="modified residue" description="N6-(pyridoxal phosphate)lysine" evidence="1">
    <location>
        <position position="226"/>
    </location>
</feature>
<dbReference type="EC" id="2.1.2.1" evidence="1"/>
<dbReference type="EMBL" id="AJ938182">
    <property type="protein sequence ID" value="CAI81686.1"/>
    <property type="molecule type" value="Genomic_DNA"/>
</dbReference>
<dbReference type="RefSeq" id="WP_000120485.1">
    <property type="nucleotide sequence ID" value="NC_007622.1"/>
</dbReference>
<dbReference type="SMR" id="Q2YUJ1"/>
<dbReference type="KEGG" id="sab:SAB1997c"/>
<dbReference type="HOGENOM" id="CLU_022477_2_1_9"/>
<dbReference type="UniPathway" id="UPA00193"/>
<dbReference type="UniPathway" id="UPA00288">
    <property type="reaction ID" value="UER01023"/>
</dbReference>
<dbReference type="GO" id="GO:0005829">
    <property type="term" value="C:cytosol"/>
    <property type="evidence" value="ECO:0007669"/>
    <property type="project" value="TreeGrafter"/>
</dbReference>
<dbReference type="GO" id="GO:0004372">
    <property type="term" value="F:glycine hydroxymethyltransferase activity"/>
    <property type="evidence" value="ECO:0007669"/>
    <property type="project" value="UniProtKB-UniRule"/>
</dbReference>
<dbReference type="GO" id="GO:0030170">
    <property type="term" value="F:pyridoxal phosphate binding"/>
    <property type="evidence" value="ECO:0007669"/>
    <property type="project" value="UniProtKB-UniRule"/>
</dbReference>
<dbReference type="GO" id="GO:0019264">
    <property type="term" value="P:glycine biosynthetic process from serine"/>
    <property type="evidence" value="ECO:0007669"/>
    <property type="project" value="UniProtKB-UniRule"/>
</dbReference>
<dbReference type="GO" id="GO:0035999">
    <property type="term" value="P:tetrahydrofolate interconversion"/>
    <property type="evidence" value="ECO:0007669"/>
    <property type="project" value="UniProtKB-UniRule"/>
</dbReference>
<dbReference type="CDD" id="cd00378">
    <property type="entry name" value="SHMT"/>
    <property type="match status" value="1"/>
</dbReference>
<dbReference type="FunFam" id="3.40.640.10:FF:000001">
    <property type="entry name" value="Serine hydroxymethyltransferase"/>
    <property type="match status" value="1"/>
</dbReference>
<dbReference type="FunFam" id="3.90.1150.10:FF:000003">
    <property type="entry name" value="Serine hydroxymethyltransferase"/>
    <property type="match status" value="1"/>
</dbReference>
<dbReference type="Gene3D" id="3.90.1150.10">
    <property type="entry name" value="Aspartate Aminotransferase, domain 1"/>
    <property type="match status" value="1"/>
</dbReference>
<dbReference type="Gene3D" id="3.40.640.10">
    <property type="entry name" value="Type I PLP-dependent aspartate aminotransferase-like (Major domain)"/>
    <property type="match status" value="1"/>
</dbReference>
<dbReference type="HAMAP" id="MF_00051">
    <property type="entry name" value="SHMT"/>
    <property type="match status" value="1"/>
</dbReference>
<dbReference type="InterPro" id="IPR015424">
    <property type="entry name" value="PyrdxlP-dep_Trfase"/>
</dbReference>
<dbReference type="InterPro" id="IPR015421">
    <property type="entry name" value="PyrdxlP-dep_Trfase_major"/>
</dbReference>
<dbReference type="InterPro" id="IPR015422">
    <property type="entry name" value="PyrdxlP-dep_Trfase_small"/>
</dbReference>
<dbReference type="InterPro" id="IPR001085">
    <property type="entry name" value="Ser_HO-MeTrfase"/>
</dbReference>
<dbReference type="InterPro" id="IPR049943">
    <property type="entry name" value="Ser_HO-MeTrfase-like"/>
</dbReference>
<dbReference type="InterPro" id="IPR019798">
    <property type="entry name" value="Ser_HO-MeTrfase_PLP_BS"/>
</dbReference>
<dbReference type="InterPro" id="IPR039429">
    <property type="entry name" value="SHMT-like_dom"/>
</dbReference>
<dbReference type="NCBIfam" id="NF000586">
    <property type="entry name" value="PRK00011.1"/>
    <property type="match status" value="1"/>
</dbReference>
<dbReference type="PANTHER" id="PTHR11680">
    <property type="entry name" value="SERINE HYDROXYMETHYLTRANSFERASE"/>
    <property type="match status" value="1"/>
</dbReference>
<dbReference type="PANTHER" id="PTHR11680:SF35">
    <property type="entry name" value="SERINE HYDROXYMETHYLTRANSFERASE 1"/>
    <property type="match status" value="1"/>
</dbReference>
<dbReference type="Pfam" id="PF00464">
    <property type="entry name" value="SHMT"/>
    <property type="match status" value="1"/>
</dbReference>
<dbReference type="PIRSF" id="PIRSF000412">
    <property type="entry name" value="SHMT"/>
    <property type="match status" value="1"/>
</dbReference>
<dbReference type="SUPFAM" id="SSF53383">
    <property type="entry name" value="PLP-dependent transferases"/>
    <property type="match status" value="1"/>
</dbReference>
<dbReference type="PROSITE" id="PS00096">
    <property type="entry name" value="SHMT"/>
    <property type="match status" value="1"/>
</dbReference>
<protein>
    <recommendedName>
        <fullName evidence="1">Serine hydroxymethyltransferase</fullName>
        <shortName evidence="1">SHMT</shortName>
        <shortName evidence="1">Serine methylase</shortName>
        <ecNumber evidence="1">2.1.2.1</ecNumber>
    </recommendedName>
</protein>
<gene>
    <name evidence="1" type="primary">glyA</name>
    <name type="ordered locus">SAB1997c</name>
</gene>
<reference key="1">
    <citation type="journal article" date="2007" name="PLoS ONE">
        <title>Molecular correlates of host specialization in Staphylococcus aureus.</title>
        <authorList>
            <person name="Herron-Olson L."/>
            <person name="Fitzgerald J.R."/>
            <person name="Musser J.M."/>
            <person name="Kapur V."/>
        </authorList>
    </citation>
    <scope>NUCLEOTIDE SEQUENCE [LARGE SCALE GENOMIC DNA]</scope>
    <source>
        <strain>bovine RF122 / ET3-1</strain>
    </source>
</reference>
<sequence>MSYITKQDKVIAEAIEREFQRQNSNIELIASENFVSEAVMEAQGSVLTNKYAEGYPGRRYYGGCEFVDVTESIAIDRAKALFGAEHVNVQPHSGSQANMAVYLVALEMGDTVLGMNLRHGGHLTHGAPVNFSGKFYNFVEYGVDKDTERINYDEVRKLALEHKPKLIVAGASAYSRTIDFKKFKEIADEVNAKLMVDMAHIAGLVAAGLHPNPVEYADFVTTTTHKTLRGPRGGMILCKEEYKKDIDKTIFPGIQGGPLEHVIAAKAVAFGEALENNFKTYQQQVVKNAKVLAEALINEGFRIVSGGTDNHLVAVDVKGSIGLTGKEAEETLDSVGITCNKNTIPFDQEKPFVTSGIRLGTPAATTRGFDEKAFEEVAKIISLALKNSKDEEKLQQAKERVAKLTAEYPLYQ</sequence>
<proteinExistence type="inferred from homology"/>
<name>GLYA_STAAB</name>
<evidence type="ECO:0000255" key="1">
    <source>
        <dbReference type="HAMAP-Rule" id="MF_00051"/>
    </source>
</evidence>